<dbReference type="EMBL" id="AE014299">
    <property type="protein sequence ID" value="AAN55066.1"/>
    <property type="molecule type" value="Genomic_DNA"/>
</dbReference>
<dbReference type="RefSeq" id="NP_717622.1">
    <property type="nucleotide sequence ID" value="NC_004347.2"/>
</dbReference>
<dbReference type="RefSeq" id="WP_011072100.1">
    <property type="nucleotide sequence ID" value="NC_004347.2"/>
</dbReference>
<dbReference type="SMR" id="Q8EFF7"/>
<dbReference type="STRING" id="211586.SO_2016"/>
<dbReference type="PaxDb" id="211586-SO_2016"/>
<dbReference type="KEGG" id="son:SO_2016"/>
<dbReference type="PATRIC" id="fig|211586.12.peg.1935"/>
<dbReference type="eggNOG" id="COG0326">
    <property type="taxonomic scope" value="Bacteria"/>
</dbReference>
<dbReference type="HOGENOM" id="CLU_006684_3_0_6"/>
<dbReference type="OrthoDB" id="9802640at2"/>
<dbReference type="PhylomeDB" id="Q8EFF7"/>
<dbReference type="BioCyc" id="SONE211586:G1GMP-1858-MONOMER"/>
<dbReference type="Proteomes" id="UP000008186">
    <property type="component" value="Chromosome"/>
</dbReference>
<dbReference type="GO" id="GO:0005829">
    <property type="term" value="C:cytosol"/>
    <property type="evidence" value="ECO:0000318"/>
    <property type="project" value="GO_Central"/>
</dbReference>
<dbReference type="GO" id="GO:0005524">
    <property type="term" value="F:ATP binding"/>
    <property type="evidence" value="ECO:0000318"/>
    <property type="project" value="GO_Central"/>
</dbReference>
<dbReference type="GO" id="GO:0016887">
    <property type="term" value="F:ATP hydrolysis activity"/>
    <property type="evidence" value="ECO:0000318"/>
    <property type="project" value="GO_Central"/>
</dbReference>
<dbReference type="GO" id="GO:0140662">
    <property type="term" value="F:ATP-dependent protein folding chaperone"/>
    <property type="evidence" value="ECO:0007669"/>
    <property type="project" value="InterPro"/>
</dbReference>
<dbReference type="GO" id="GO:0051082">
    <property type="term" value="F:unfolded protein binding"/>
    <property type="evidence" value="ECO:0000318"/>
    <property type="project" value="GO_Central"/>
</dbReference>
<dbReference type="GO" id="GO:0006974">
    <property type="term" value="P:DNA damage response"/>
    <property type="evidence" value="ECO:0000318"/>
    <property type="project" value="GO_Central"/>
</dbReference>
<dbReference type="GO" id="GO:0006457">
    <property type="term" value="P:protein folding"/>
    <property type="evidence" value="ECO:0000318"/>
    <property type="project" value="GO_Central"/>
</dbReference>
<dbReference type="GO" id="GO:0009408">
    <property type="term" value="P:response to heat"/>
    <property type="evidence" value="ECO:0000318"/>
    <property type="project" value="GO_Central"/>
</dbReference>
<dbReference type="CDD" id="cd16927">
    <property type="entry name" value="HATPase_Hsp90-like"/>
    <property type="match status" value="1"/>
</dbReference>
<dbReference type="FunFam" id="3.30.230.80:FF:000002">
    <property type="entry name" value="Molecular chaperone HtpG"/>
    <property type="match status" value="1"/>
</dbReference>
<dbReference type="FunFam" id="3.30.565.10:FF:000009">
    <property type="entry name" value="Molecular chaperone HtpG"/>
    <property type="match status" value="1"/>
</dbReference>
<dbReference type="Gene3D" id="3.30.230.80">
    <property type="match status" value="1"/>
</dbReference>
<dbReference type="Gene3D" id="3.40.50.11260">
    <property type="match status" value="1"/>
</dbReference>
<dbReference type="Gene3D" id="1.20.120.790">
    <property type="entry name" value="Heat shock protein 90, C-terminal domain"/>
    <property type="match status" value="1"/>
</dbReference>
<dbReference type="Gene3D" id="3.30.565.10">
    <property type="entry name" value="Histidine kinase-like ATPase, C-terminal domain"/>
    <property type="match status" value="1"/>
</dbReference>
<dbReference type="HAMAP" id="MF_00505">
    <property type="entry name" value="HSP90"/>
    <property type="match status" value="1"/>
</dbReference>
<dbReference type="InterPro" id="IPR036890">
    <property type="entry name" value="HATPase_C_sf"/>
</dbReference>
<dbReference type="InterPro" id="IPR019805">
    <property type="entry name" value="Heat_shock_protein_90_CS"/>
</dbReference>
<dbReference type="InterPro" id="IPR037196">
    <property type="entry name" value="HSP90_C"/>
</dbReference>
<dbReference type="InterPro" id="IPR001404">
    <property type="entry name" value="Hsp90_fam"/>
</dbReference>
<dbReference type="InterPro" id="IPR020575">
    <property type="entry name" value="Hsp90_N"/>
</dbReference>
<dbReference type="InterPro" id="IPR020568">
    <property type="entry name" value="Ribosomal_Su5_D2-typ_SF"/>
</dbReference>
<dbReference type="NCBIfam" id="NF003555">
    <property type="entry name" value="PRK05218.1"/>
    <property type="match status" value="1"/>
</dbReference>
<dbReference type="PANTHER" id="PTHR11528">
    <property type="entry name" value="HEAT SHOCK PROTEIN 90 FAMILY MEMBER"/>
    <property type="match status" value="1"/>
</dbReference>
<dbReference type="Pfam" id="PF13589">
    <property type="entry name" value="HATPase_c_3"/>
    <property type="match status" value="1"/>
</dbReference>
<dbReference type="Pfam" id="PF00183">
    <property type="entry name" value="HSP90"/>
    <property type="match status" value="1"/>
</dbReference>
<dbReference type="PIRSF" id="PIRSF002583">
    <property type="entry name" value="Hsp90"/>
    <property type="match status" value="1"/>
</dbReference>
<dbReference type="PRINTS" id="PR00775">
    <property type="entry name" value="HEATSHOCK90"/>
</dbReference>
<dbReference type="SMART" id="SM00387">
    <property type="entry name" value="HATPase_c"/>
    <property type="match status" value="1"/>
</dbReference>
<dbReference type="SUPFAM" id="SSF55874">
    <property type="entry name" value="ATPase domain of HSP90 chaperone/DNA topoisomerase II/histidine kinase"/>
    <property type="match status" value="1"/>
</dbReference>
<dbReference type="SUPFAM" id="SSF110942">
    <property type="entry name" value="HSP90 C-terminal domain"/>
    <property type="match status" value="1"/>
</dbReference>
<dbReference type="SUPFAM" id="SSF54211">
    <property type="entry name" value="Ribosomal protein S5 domain 2-like"/>
    <property type="match status" value="1"/>
</dbReference>
<dbReference type="PROSITE" id="PS00298">
    <property type="entry name" value="HSP90"/>
    <property type="match status" value="1"/>
</dbReference>
<gene>
    <name evidence="1" type="primary">htpG</name>
    <name type="ordered locus">SO_2016</name>
</gene>
<accession>Q8EFF7</accession>
<name>HTPG_SHEON</name>
<feature type="chain" id="PRO_0000063014" description="Chaperone protein HtpG">
    <location>
        <begin position="1"/>
        <end position="637"/>
    </location>
</feature>
<feature type="region of interest" description="A; substrate-binding" evidence="1">
    <location>
        <begin position="1"/>
        <end position="345"/>
    </location>
</feature>
<feature type="region of interest" description="B" evidence="1">
    <location>
        <begin position="346"/>
        <end position="562"/>
    </location>
</feature>
<feature type="region of interest" description="C" evidence="1">
    <location>
        <begin position="563"/>
        <end position="637"/>
    </location>
</feature>
<sequence>MSQQETHGFQTEVKQLLHLMIHSLYSNKEIFLRELVSNAADAADKLRYLALTNDALYEGDGELRVRISADKEKGTVTIEDNGVGMTRDGVIEHLGTIAKSGTAEFFKNLSGEASKDSQLIGQFGVGFYSAFIVAKKVTVRTRAAGHKANEAVLWESEGEGSFTVETITKATRGTEITLHLRDDEKEFADDWRLRSIITKYSDHISIPVEMWQEGTPERDGPDGEKIPATEGYWKAMNKATALWMRNKSEITDEEYQEFYKHISHDYTDALLWSHNRVEGKQEYTNLLYIPSKAPWDLWNRDRKHGLKLFVQRVFIMDDAEQFMPSYLRFVQGLIDSNDLPLNVSREILQDNHITKAMRTGITKRVLGMLEKLAKDDAEKYQQFWAEFGQVLKEGPAEDFANRERIAGLLRFASTHTGSAAPTVSLDDYISRMKEGQTKIYYIVADSHEAAANSPHLELLRKKGIEVLLMSERIDEWLINHLTEYKEKQLHSVTRGELELGELEDAAEKEAQEKLAEESAPLIERIKAALGASVADVKVTSRLTDTPACVVTGEGEMSTQMIKLMQAAGQPVPEVKPTFEVNPAHPLVSRLNDLQDEAAFADWSNLLLQQAQLSEKGSLADPSAFIKLMNQMLLANLK</sequence>
<comment type="function">
    <text evidence="1">Molecular chaperone. Has ATPase activity.</text>
</comment>
<comment type="subunit">
    <text evidence="1">Homodimer.</text>
</comment>
<comment type="subcellular location">
    <subcellularLocation>
        <location evidence="1">Cytoplasm</location>
    </subcellularLocation>
</comment>
<comment type="similarity">
    <text evidence="1">Belongs to the heat shock protein 90 family.</text>
</comment>
<evidence type="ECO:0000255" key="1">
    <source>
        <dbReference type="HAMAP-Rule" id="MF_00505"/>
    </source>
</evidence>
<organism>
    <name type="scientific">Shewanella oneidensis (strain ATCC 700550 / JCM 31522 / CIP 106686 / LMG 19005 / NCIMB 14063 / MR-1)</name>
    <dbReference type="NCBI Taxonomy" id="211586"/>
    <lineage>
        <taxon>Bacteria</taxon>
        <taxon>Pseudomonadati</taxon>
        <taxon>Pseudomonadota</taxon>
        <taxon>Gammaproteobacteria</taxon>
        <taxon>Alteromonadales</taxon>
        <taxon>Shewanellaceae</taxon>
        <taxon>Shewanella</taxon>
    </lineage>
</organism>
<keyword id="KW-0067">ATP-binding</keyword>
<keyword id="KW-0143">Chaperone</keyword>
<keyword id="KW-0963">Cytoplasm</keyword>
<keyword id="KW-0547">Nucleotide-binding</keyword>
<keyword id="KW-1185">Reference proteome</keyword>
<keyword id="KW-0346">Stress response</keyword>
<proteinExistence type="inferred from homology"/>
<reference key="1">
    <citation type="journal article" date="2002" name="Nat. Biotechnol.">
        <title>Genome sequence of the dissimilatory metal ion-reducing bacterium Shewanella oneidensis.</title>
        <authorList>
            <person name="Heidelberg J.F."/>
            <person name="Paulsen I.T."/>
            <person name="Nelson K.E."/>
            <person name="Gaidos E.J."/>
            <person name="Nelson W.C."/>
            <person name="Read T.D."/>
            <person name="Eisen J.A."/>
            <person name="Seshadri R."/>
            <person name="Ward N.L."/>
            <person name="Methe B.A."/>
            <person name="Clayton R.A."/>
            <person name="Meyer T."/>
            <person name="Tsapin A."/>
            <person name="Scott J."/>
            <person name="Beanan M.J."/>
            <person name="Brinkac L.M."/>
            <person name="Daugherty S.C."/>
            <person name="DeBoy R.T."/>
            <person name="Dodson R.J."/>
            <person name="Durkin A.S."/>
            <person name="Haft D.H."/>
            <person name="Kolonay J.F."/>
            <person name="Madupu R."/>
            <person name="Peterson J.D."/>
            <person name="Umayam L.A."/>
            <person name="White O."/>
            <person name="Wolf A.M."/>
            <person name="Vamathevan J.J."/>
            <person name="Weidman J.F."/>
            <person name="Impraim M."/>
            <person name="Lee K."/>
            <person name="Berry K.J."/>
            <person name="Lee C."/>
            <person name="Mueller J."/>
            <person name="Khouri H.M."/>
            <person name="Gill J."/>
            <person name="Utterback T.R."/>
            <person name="McDonald L.A."/>
            <person name="Feldblyum T.V."/>
            <person name="Smith H.O."/>
            <person name="Venter J.C."/>
            <person name="Nealson K.H."/>
            <person name="Fraser C.M."/>
        </authorList>
    </citation>
    <scope>NUCLEOTIDE SEQUENCE [LARGE SCALE GENOMIC DNA]</scope>
    <source>
        <strain>ATCC 700550 / JCM 31522 / CIP 106686 / LMG 19005 / NCIMB 14063 / MR-1</strain>
    </source>
</reference>
<protein>
    <recommendedName>
        <fullName evidence="1">Chaperone protein HtpG</fullName>
    </recommendedName>
    <alternativeName>
        <fullName evidence="1">Heat shock protein HtpG</fullName>
    </alternativeName>
    <alternativeName>
        <fullName evidence="1">High temperature protein G</fullName>
    </alternativeName>
</protein>